<comment type="function">
    <text evidence="1">Antibacterial and antifungal activity. Presents chitin-binding activity (By similarity).</text>
</comment>
<comment type="subcellular location">
    <subcellularLocation>
        <location>Cytoplasmic granule</location>
    </subcellularLocation>
    <text>Cytoplasmic granules of hemocytes and to a lesser extent in small granules of hemocytes.</text>
</comment>
<comment type="similarity">
    <text evidence="3">Belongs to the penaeidin family.</text>
</comment>
<sequence>MRLVVCLVFLASFALVCQGYSSGYTRPLPKPSRPIFIRPIGCDVCYGIPSSTARLCCFRYGDCCHRG</sequence>
<evidence type="ECO:0000250" key="1"/>
<evidence type="ECO:0000255" key="2"/>
<evidence type="ECO:0000305" key="3"/>
<organism>
    <name type="scientific">Penaeus vannamei</name>
    <name type="common">Whiteleg shrimp</name>
    <name type="synonym">Litopenaeus vannamei</name>
    <dbReference type="NCBI Taxonomy" id="6689"/>
    <lineage>
        <taxon>Eukaryota</taxon>
        <taxon>Metazoa</taxon>
        <taxon>Ecdysozoa</taxon>
        <taxon>Arthropoda</taxon>
        <taxon>Crustacea</taxon>
        <taxon>Multicrustacea</taxon>
        <taxon>Malacostraca</taxon>
        <taxon>Eumalacostraca</taxon>
        <taxon>Eucarida</taxon>
        <taxon>Decapoda</taxon>
        <taxon>Dendrobranchiata</taxon>
        <taxon>Penaeoidea</taxon>
        <taxon>Penaeidae</taxon>
        <taxon>Penaeus</taxon>
    </lineage>
</organism>
<feature type="signal peptide" evidence="2">
    <location>
        <begin position="1"/>
        <end position="19"/>
    </location>
</feature>
<feature type="chain" id="PRO_0000023521" description="Penaeidin-4c">
    <location>
        <begin position="20"/>
        <end position="66"/>
    </location>
</feature>
<feature type="modified residue" description="Arginine amide" evidence="1">
    <location>
        <position position="66"/>
    </location>
</feature>
<feature type="disulfide bond" evidence="1">
    <location>
        <begin position="42"/>
        <end position="56"/>
    </location>
</feature>
<feature type="disulfide bond" evidence="1">
    <location>
        <begin position="45"/>
        <end position="63"/>
    </location>
</feature>
<feature type="disulfide bond" evidence="1">
    <location>
        <begin position="57"/>
        <end position="64"/>
    </location>
</feature>
<keyword id="KW-0027">Amidation</keyword>
<keyword id="KW-0044">Antibiotic</keyword>
<keyword id="KW-0929">Antimicrobial</keyword>
<keyword id="KW-0147">Chitin-binding</keyword>
<keyword id="KW-1015">Disulfide bond</keyword>
<keyword id="KW-0295">Fungicide</keyword>
<keyword id="KW-0732">Signal</keyword>
<proteinExistence type="inferred from homology"/>
<protein>
    <recommendedName>
        <fullName>Penaeidin-4c</fullName>
        <shortName>Pen-4c</shortName>
    </recommendedName>
</protein>
<name>PEN4C_PENVA</name>
<reference key="1">
    <citation type="journal article" date="2002" name="Immunogenetics">
        <title>Diversity of the penaeidin antimicrobial peptides in two shrimp species.</title>
        <authorList>
            <person name="Cuthbertson B.J."/>
            <person name="Shepard E.F."/>
            <person name="Chapman R.W."/>
            <person name="Gross P.S."/>
        </authorList>
    </citation>
    <scope>NUCLEOTIDE SEQUENCE [MRNA]</scope>
    <source>
        <tissue>Hemocyte</tissue>
    </source>
</reference>
<dbReference type="EMBL" id="AF390149">
    <property type="protein sequence ID" value="AAK77542.1"/>
    <property type="molecule type" value="mRNA"/>
</dbReference>
<dbReference type="SMR" id="Q963C3"/>
<dbReference type="GO" id="GO:0005737">
    <property type="term" value="C:cytoplasm"/>
    <property type="evidence" value="ECO:0007669"/>
    <property type="project" value="InterPro"/>
</dbReference>
<dbReference type="GO" id="GO:0008061">
    <property type="term" value="F:chitin binding"/>
    <property type="evidence" value="ECO:0007669"/>
    <property type="project" value="UniProtKB-KW"/>
</dbReference>
<dbReference type="GO" id="GO:0042742">
    <property type="term" value="P:defense response to bacterium"/>
    <property type="evidence" value="ECO:0007669"/>
    <property type="project" value="UniProtKB-KW"/>
</dbReference>
<dbReference type="GO" id="GO:0050832">
    <property type="term" value="P:defense response to fungus"/>
    <property type="evidence" value="ECO:0007669"/>
    <property type="project" value="UniProtKB-KW"/>
</dbReference>
<dbReference type="GO" id="GO:0031640">
    <property type="term" value="P:killing of cells of another organism"/>
    <property type="evidence" value="ECO:0007669"/>
    <property type="project" value="UniProtKB-KW"/>
</dbReference>
<dbReference type="InterPro" id="IPR009226">
    <property type="entry name" value="Penaeidin"/>
</dbReference>
<dbReference type="Pfam" id="PF05927">
    <property type="entry name" value="Penaeidin"/>
    <property type="match status" value="1"/>
</dbReference>
<accession>Q963C3</accession>